<name>WNT7B_SCEOC</name>
<evidence type="ECO:0000250" key="1">
    <source>
        <dbReference type="UniProtKB" id="P27467"/>
    </source>
</evidence>
<evidence type="ECO:0000250" key="2">
    <source>
        <dbReference type="UniProtKB" id="P28026"/>
    </source>
</evidence>
<evidence type="ECO:0000250" key="3">
    <source>
        <dbReference type="UniProtKB" id="P28047"/>
    </source>
</evidence>
<evidence type="ECO:0000250" key="4">
    <source>
        <dbReference type="UniProtKB" id="P56704"/>
    </source>
</evidence>
<evidence type="ECO:0000250" key="5">
    <source>
        <dbReference type="UniProtKB" id="P56706"/>
    </source>
</evidence>
<evidence type="ECO:0000255" key="6"/>
<evidence type="ECO:0000305" key="7"/>
<accession>P28144</accession>
<proteinExistence type="inferred from homology"/>
<reference key="1">
    <citation type="journal article" date="1992" name="Proc. Natl. Acad. Sci. U.S.A.">
        <title>Diversification of the Wnt gene family on the ancestral lineage of vertebrates.</title>
        <authorList>
            <person name="Sidow A."/>
        </authorList>
    </citation>
    <scope>NUCLEOTIDE SEQUENCE [GENOMIC DNA]</scope>
</reference>
<keyword id="KW-0217">Developmental protein</keyword>
<keyword id="KW-1015">Disulfide bond</keyword>
<keyword id="KW-0272">Extracellular matrix</keyword>
<keyword id="KW-0325">Glycoprotein</keyword>
<keyword id="KW-0449">Lipoprotein</keyword>
<keyword id="KW-0964">Secreted</keyword>
<keyword id="KW-0879">Wnt signaling pathway</keyword>
<comment type="function">
    <text evidence="3 5">Ligand for members of the frizzled family of seven transmembrane receptors that functions in the canonical Wnt/beta-catenin signaling pathway (By similarity). Required for normal fusion of the chorion and the allantois during placenta development (By similarity). Required for central nervous system (CNS) angiogenesis and blood-brain barrier regulation (By similarity).</text>
</comment>
<comment type="subcellular location">
    <subcellularLocation>
        <location evidence="5">Secreted</location>
        <location evidence="5">Extracellular space</location>
        <location evidence="5">Extracellular matrix</location>
    </subcellularLocation>
    <subcellularLocation>
        <location evidence="5">Secreted</location>
    </subcellularLocation>
</comment>
<comment type="PTM">
    <text evidence="1 4">Palmitoleoylation is required for efficient binding to frizzled receptors. Depalmitoleoylation leads to Wnt signaling pathway inhibition.</text>
</comment>
<comment type="similarity">
    <text evidence="7">Belongs to the Wnt family.</text>
</comment>
<gene>
    <name type="primary">WNT-7B</name>
</gene>
<protein>
    <recommendedName>
        <fullName>Protein Wnt-7b</fullName>
    </recommendedName>
</protein>
<feature type="chain" id="PRO_0000200653" description="Protein Wnt-7b">
    <location>
        <begin position="1" status="less than"/>
        <end position="123" status="greater than"/>
    </location>
</feature>
<feature type="region of interest" description="Disordered linker" evidence="5">
    <location>
        <begin position="33"/>
        <end position="61"/>
    </location>
</feature>
<feature type="lipid moiety-binding region" description="O-palmitoleoyl serine; by PORCN" evidence="4">
    <location>
        <position position="1"/>
    </location>
</feature>
<feature type="glycosylation site" description="N-linked (GlcNAc...) asparagine" evidence="6">
    <location>
        <position position="90"/>
    </location>
</feature>
<feature type="disulfide bond" evidence="2">
    <location>
        <begin position="89"/>
        <end position="104"/>
    </location>
</feature>
<feature type="non-terminal residue">
    <location>
        <position position="1"/>
    </location>
</feature>
<feature type="non-terminal residue">
    <location>
        <position position="123"/>
    </location>
</feature>
<organism>
    <name type="scientific">Sceloporus occidentalis</name>
    <name type="common">Western fence lizard</name>
    <dbReference type="NCBI Taxonomy" id="8519"/>
    <lineage>
        <taxon>Eukaryota</taxon>
        <taxon>Metazoa</taxon>
        <taxon>Chordata</taxon>
        <taxon>Craniata</taxon>
        <taxon>Vertebrata</taxon>
        <taxon>Euteleostomi</taxon>
        <taxon>Lepidosauria</taxon>
        <taxon>Squamata</taxon>
        <taxon>Bifurcata</taxon>
        <taxon>Unidentata</taxon>
        <taxon>Episquamata</taxon>
        <taxon>Toxicofera</taxon>
        <taxon>Iguania</taxon>
        <taxon>Phrynosomatidae</taxon>
        <taxon>Phrynosomatinae</taxon>
        <taxon>Sceloporus</taxon>
    </lineage>
</organism>
<dbReference type="EMBL" id="M91301">
    <property type="protein sequence ID" value="AAA49544.1"/>
    <property type="molecule type" value="Genomic_DNA"/>
</dbReference>
<dbReference type="SMR" id="P28144"/>
<dbReference type="GlyCosmos" id="P28144">
    <property type="glycosylation" value="1 site, No reported glycans"/>
</dbReference>
<dbReference type="GO" id="GO:0005615">
    <property type="term" value="C:extracellular space"/>
    <property type="evidence" value="ECO:0007669"/>
    <property type="project" value="TreeGrafter"/>
</dbReference>
<dbReference type="GO" id="GO:0005125">
    <property type="term" value="F:cytokine activity"/>
    <property type="evidence" value="ECO:0007669"/>
    <property type="project" value="TreeGrafter"/>
</dbReference>
<dbReference type="GO" id="GO:0005109">
    <property type="term" value="F:frizzled binding"/>
    <property type="evidence" value="ECO:0007669"/>
    <property type="project" value="TreeGrafter"/>
</dbReference>
<dbReference type="GO" id="GO:0048513">
    <property type="term" value="P:animal organ development"/>
    <property type="evidence" value="ECO:0007669"/>
    <property type="project" value="UniProtKB-ARBA"/>
</dbReference>
<dbReference type="GO" id="GO:0060070">
    <property type="term" value="P:canonical Wnt signaling pathway"/>
    <property type="evidence" value="ECO:0007669"/>
    <property type="project" value="TreeGrafter"/>
</dbReference>
<dbReference type="GO" id="GO:0045165">
    <property type="term" value="P:cell fate commitment"/>
    <property type="evidence" value="ECO:0007669"/>
    <property type="project" value="TreeGrafter"/>
</dbReference>
<dbReference type="GO" id="GO:0030182">
    <property type="term" value="P:neuron differentiation"/>
    <property type="evidence" value="ECO:0007669"/>
    <property type="project" value="TreeGrafter"/>
</dbReference>
<dbReference type="GO" id="GO:0046330">
    <property type="term" value="P:positive regulation of JNK cascade"/>
    <property type="evidence" value="ECO:0007669"/>
    <property type="project" value="TreeGrafter"/>
</dbReference>
<dbReference type="Gene3D" id="3.30.2460.20">
    <property type="match status" value="1"/>
</dbReference>
<dbReference type="InterPro" id="IPR005817">
    <property type="entry name" value="Wnt"/>
</dbReference>
<dbReference type="InterPro" id="IPR013300">
    <property type="entry name" value="Wnt7"/>
</dbReference>
<dbReference type="InterPro" id="IPR043158">
    <property type="entry name" value="Wnt_C"/>
</dbReference>
<dbReference type="PANTHER" id="PTHR12027:SF73">
    <property type="entry name" value="PROTEIN WNT-7B"/>
    <property type="match status" value="1"/>
</dbReference>
<dbReference type="PANTHER" id="PTHR12027">
    <property type="entry name" value="WNT RELATED"/>
    <property type="match status" value="1"/>
</dbReference>
<dbReference type="Pfam" id="PF00110">
    <property type="entry name" value="wnt"/>
    <property type="match status" value="1"/>
</dbReference>
<dbReference type="PRINTS" id="PR01891">
    <property type="entry name" value="WNT7PROTEIN"/>
</dbReference>
<dbReference type="SMART" id="SM00097">
    <property type="entry name" value="WNT1"/>
    <property type="match status" value="1"/>
</dbReference>
<sequence>SGSCTTKTCWTTLPKFREIGYILKEKYNAAVQVEVVRASRLRQPTFLKIKQIRSYQKPMETDLVYIDKSPNYCEEDASTGSVGTQGRLCNRTSLSADGCDMMCCGRGYNTHQYTKVWQCNCKF</sequence>